<protein>
    <recommendedName>
        <fullName>Caerin-4.2</fullName>
    </recommendedName>
</protein>
<accession>P56243</accession>
<comment type="function">
    <text>Antibacterial peptide, that adopts an alpha helical conformation which can disrupt bacterial membranes. Each caerin displays a different antimicrobial specificity.</text>
</comment>
<comment type="subcellular location">
    <subcellularLocation>
        <location>Secreted</location>
    </subcellularLocation>
</comment>
<comment type="tissue specificity">
    <text>Expressed by the skin parotoid and/or rostral glands.</text>
</comment>
<comment type="mass spectrometry" mass="2340.0" method="FAB" evidence="1"/>
<comment type="similarity">
    <text evidence="2">Belongs to the frog skin active peptide (FSAP) family. Caerin subfamily.</text>
</comment>
<name>CR42_RANCA</name>
<feature type="peptide" id="PRO_0000043753" description="Caerin-4.2">
    <location>
        <begin position="1"/>
        <end position="23"/>
    </location>
</feature>
<dbReference type="GO" id="GO:0005576">
    <property type="term" value="C:extracellular region"/>
    <property type="evidence" value="ECO:0007669"/>
    <property type="project" value="UniProtKB-SubCell"/>
</dbReference>
<dbReference type="GO" id="GO:0042742">
    <property type="term" value="P:defense response to bacterium"/>
    <property type="evidence" value="ECO:0007669"/>
    <property type="project" value="UniProtKB-KW"/>
</dbReference>
<organism>
    <name type="scientific">Ranoidea caerulea</name>
    <name type="common">Green tree frog</name>
    <name type="synonym">Litoria caerulea</name>
    <dbReference type="NCBI Taxonomy" id="30344"/>
    <lineage>
        <taxon>Eukaryota</taxon>
        <taxon>Metazoa</taxon>
        <taxon>Chordata</taxon>
        <taxon>Craniata</taxon>
        <taxon>Vertebrata</taxon>
        <taxon>Euteleostomi</taxon>
        <taxon>Amphibia</taxon>
        <taxon>Batrachia</taxon>
        <taxon>Anura</taxon>
        <taxon>Neobatrachia</taxon>
        <taxon>Hyloidea</taxon>
        <taxon>Hylidae</taxon>
        <taxon>Pelodryadinae</taxon>
        <taxon>Ranoidea</taxon>
    </lineage>
</organism>
<proteinExistence type="evidence at protein level"/>
<evidence type="ECO:0000269" key="1">
    <source ref="1"/>
</evidence>
<evidence type="ECO:0000305" key="2"/>
<sequence length="23" mass="2343">GLWQKIKSAAGDLASGIVEAIKS</sequence>
<keyword id="KW-0878">Amphibian defense peptide</keyword>
<keyword id="KW-0044">Antibiotic</keyword>
<keyword id="KW-0929">Antimicrobial</keyword>
<keyword id="KW-0903">Direct protein sequencing</keyword>
<keyword id="KW-0964">Secreted</keyword>
<reference key="1">
    <citation type="journal article" date="1993" name="J. Chem. Res.">
        <title>Peptides from Australian frogs. The structures of the caerins from Litoria caerula.</title>
        <authorList>
            <person name="Stone D.J.M."/>
            <person name="Waugh R.J."/>
            <person name="Bowie J.H."/>
            <person name="Wallace J.C."/>
            <person name="Tyler M.J."/>
        </authorList>
    </citation>
    <scope>PROTEIN SEQUENCE</scope>
    <scope>MASS SPECTROMETRY</scope>
    <source>
        <tissue>Parotoid gland</tissue>
    </source>
</reference>